<keyword id="KW-0034">Amyloid</keyword>
<keyword id="KW-1003">Cell membrane</keyword>
<keyword id="KW-0186">Copper</keyword>
<keyword id="KW-1015">Disulfide bond</keyword>
<keyword id="KW-0325">Glycoprotein</keyword>
<keyword id="KW-0333">Golgi apparatus</keyword>
<keyword id="KW-0336">GPI-anchor</keyword>
<keyword id="KW-0449">Lipoprotein</keyword>
<keyword id="KW-0472">Membrane</keyword>
<keyword id="KW-0479">Metal-binding</keyword>
<keyword id="KW-0640">Prion</keyword>
<keyword id="KW-1185">Reference proteome</keyword>
<keyword id="KW-0677">Repeat</keyword>
<keyword id="KW-0732">Signal</keyword>
<keyword id="KW-0862">Zinc</keyword>
<protein>
    <recommendedName>
        <fullName>Major prion protein</fullName>
        <shortName>PrP</shortName>
    </recommendedName>
    <alternativeName>
        <fullName>PrP27-30</fullName>
    </alternativeName>
    <alternativeName>
        <fullName>PrP33-35C</fullName>
    </alternativeName>
    <cdAntigenName>CD230</cdAntigenName>
</protein>
<gene>
    <name type="primary">PRNP</name>
    <name type="synonym">PRP</name>
</gene>
<proteinExistence type="inferred from homology"/>
<organism>
    <name type="scientific">Neovison vison</name>
    <name type="common">American mink</name>
    <name type="synonym">Mustela vison</name>
    <dbReference type="NCBI Taxonomy" id="452646"/>
    <lineage>
        <taxon>Eukaryota</taxon>
        <taxon>Metazoa</taxon>
        <taxon>Chordata</taxon>
        <taxon>Craniata</taxon>
        <taxon>Vertebrata</taxon>
        <taxon>Euteleostomi</taxon>
        <taxon>Mammalia</taxon>
        <taxon>Eutheria</taxon>
        <taxon>Laurasiatheria</taxon>
        <taxon>Carnivora</taxon>
        <taxon>Caniformia</taxon>
        <taxon>Musteloidea</taxon>
        <taxon>Mustelidae</taxon>
        <taxon>Mustelinae</taxon>
        <taxon>Neogale</taxon>
    </lineage>
</organism>
<dbReference type="EMBL" id="S46825">
    <property type="protein sequence ID" value="AAB23801.1"/>
    <property type="molecule type" value="Genomic_DNA"/>
</dbReference>
<dbReference type="BMRB" id="P40244"/>
<dbReference type="SMR" id="P40244"/>
<dbReference type="GlyCosmos" id="P40244">
    <property type="glycosylation" value="2 sites, No reported glycans"/>
</dbReference>
<dbReference type="Ensembl" id="ENSNVIT00000028502.1">
    <property type="protein sequence ID" value="ENSNVIP00000024563.1"/>
    <property type="gene ID" value="ENSNVIG00000019036.1"/>
</dbReference>
<dbReference type="GeneTree" id="ENSGT00510000049083"/>
<dbReference type="Proteomes" id="UP000694425">
    <property type="component" value="Unplaced"/>
</dbReference>
<dbReference type="GO" id="GO:0009986">
    <property type="term" value="C:cell surface"/>
    <property type="evidence" value="ECO:0007669"/>
    <property type="project" value="Ensembl"/>
</dbReference>
<dbReference type="GO" id="GO:0005829">
    <property type="term" value="C:cytosol"/>
    <property type="evidence" value="ECO:0007669"/>
    <property type="project" value="Ensembl"/>
</dbReference>
<dbReference type="GO" id="GO:0030425">
    <property type="term" value="C:dendrite"/>
    <property type="evidence" value="ECO:0007669"/>
    <property type="project" value="Ensembl"/>
</dbReference>
<dbReference type="GO" id="GO:0005783">
    <property type="term" value="C:endoplasmic reticulum"/>
    <property type="evidence" value="ECO:0007669"/>
    <property type="project" value="Ensembl"/>
</dbReference>
<dbReference type="GO" id="GO:0005794">
    <property type="term" value="C:Golgi apparatus"/>
    <property type="evidence" value="ECO:0007669"/>
    <property type="project" value="UniProtKB-SubCell"/>
</dbReference>
<dbReference type="GO" id="GO:0016234">
    <property type="term" value="C:inclusion body"/>
    <property type="evidence" value="ECO:0007669"/>
    <property type="project" value="Ensembl"/>
</dbReference>
<dbReference type="GO" id="GO:0045121">
    <property type="term" value="C:membrane raft"/>
    <property type="evidence" value="ECO:0007669"/>
    <property type="project" value="Ensembl"/>
</dbReference>
<dbReference type="GO" id="GO:0031965">
    <property type="term" value="C:nuclear membrane"/>
    <property type="evidence" value="ECO:0007669"/>
    <property type="project" value="Ensembl"/>
</dbReference>
<dbReference type="GO" id="GO:0005886">
    <property type="term" value="C:plasma membrane"/>
    <property type="evidence" value="ECO:0007669"/>
    <property type="project" value="UniProtKB-SubCell"/>
</dbReference>
<dbReference type="GO" id="GO:0098552">
    <property type="term" value="C:side of membrane"/>
    <property type="evidence" value="ECO:0007669"/>
    <property type="project" value="UniProtKB-KW"/>
</dbReference>
<dbReference type="GO" id="GO:0043195">
    <property type="term" value="C:terminal bouton"/>
    <property type="evidence" value="ECO:0007669"/>
    <property type="project" value="Ensembl"/>
</dbReference>
<dbReference type="GO" id="GO:0001540">
    <property type="term" value="F:amyloid-beta binding"/>
    <property type="evidence" value="ECO:0007669"/>
    <property type="project" value="Ensembl"/>
</dbReference>
<dbReference type="GO" id="GO:0019828">
    <property type="term" value="F:aspartic-type endopeptidase inhibitor activity"/>
    <property type="evidence" value="ECO:0007669"/>
    <property type="project" value="Ensembl"/>
</dbReference>
<dbReference type="GO" id="GO:0005507">
    <property type="term" value="F:copper ion binding"/>
    <property type="evidence" value="ECO:0000250"/>
    <property type="project" value="UniProtKB"/>
</dbReference>
<dbReference type="GO" id="GO:1903135">
    <property type="term" value="F:cupric ion binding"/>
    <property type="evidence" value="ECO:0007669"/>
    <property type="project" value="Ensembl"/>
</dbReference>
<dbReference type="GO" id="GO:1903136">
    <property type="term" value="F:cuprous ion binding"/>
    <property type="evidence" value="ECO:0007669"/>
    <property type="project" value="Ensembl"/>
</dbReference>
<dbReference type="GO" id="GO:0005539">
    <property type="term" value="F:glycosaminoglycan binding"/>
    <property type="evidence" value="ECO:0007669"/>
    <property type="project" value="Ensembl"/>
</dbReference>
<dbReference type="GO" id="GO:0042802">
    <property type="term" value="F:identical protein binding"/>
    <property type="evidence" value="ECO:0007669"/>
    <property type="project" value="Ensembl"/>
</dbReference>
<dbReference type="GO" id="GO:0008017">
    <property type="term" value="F:microtubule binding"/>
    <property type="evidence" value="ECO:0007669"/>
    <property type="project" value="Ensembl"/>
</dbReference>
<dbReference type="GO" id="GO:0140693">
    <property type="term" value="F:molecular condensate scaffold activity"/>
    <property type="evidence" value="ECO:0007669"/>
    <property type="project" value="Ensembl"/>
</dbReference>
<dbReference type="GO" id="GO:0140677">
    <property type="term" value="F:molecular function activator activity"/>
    <property type="evidence" value="ECO:0007669"/>
    <property type="project" value="Ensembl"/>
</dbReference>
<dbReference type="GO" id="GO:0002020">
    <property type="term" value="F:protease binding"/>
    <property type="evidence" value="ECO:0007669"/>
    <property type="project" value="Ensembl"/>
</dbReference>
<dbReference type="GO" id="GO:0044877">
    <property type="term" value="F:protein-containing complex binding"/>
    <property type="evidence" value="ECO:0007669"/>
    <property type="project" value="Ensembl"/>
</dbReference>
<dbReference type="GO" id="GO:0038023">
    <property type="term" value="F:signaling receptor activity"/>
    <property type="evidence" value="ECO:0007669"/>
    <property type="project" value="Ensembl"/>
</dbReference>
<dbReference type="GO" id="GO:0031802">
    <property type="term" value="F:type 5 metabotropic glutamate receptor binding"/>
    <property type="evidence" value="ECO:0007669"/>
    <property type="project" value="Ensembl"/>
</dbReference>
<dbReference type="GO" id="GO:1904646">
    <property type="term" value="P:cellular response to amyloid-beta"/>
    <property type="evidence" value="ECO:0007669"/>
    <property type="project" value="Ensembl"/>
</dbReference>
<dbReference type="GO" id="GO:0071280">
    <property type="term" value="P:cellular response to copper ion"/>
    <property type="evidence" value="ECO:0007669"/>
    <property type="project" value="Ensembl"/>
</dbReference>
<dbReference type="GO" id="GO:0071466">
    <property type="term" value="P:cellular response to xenobiotic stimulus"/>
    <property type="evidence" value="ECO:0007669"/>
    <property type="project" value="Ensembl"/>
</dbReference>
<dbReference type="GO" id="GO:0035556">
    <property type="term" value="P:intracellular signal transduction"/>
    <property type="evidence" value="ECO:0007669"/>
    <property type="project" value="Ensembl"/>
</dbReference>
<dbReference type="GO" id="GO:0007611">
    <property type="term" value="P:learning or memory"/>
    <property type="evidence" value="ECO:0007669"/>
    <property type="project" value="Ensembl"/>
</dbReference>
<dbReference type="GO" id="GO:0046007">
    <property type="term" value="P:negative regulation of activated T cell proliferation"/>
    <property type="evidence" value="ECO:0007669"/>
    <property type="project" value="Ensembl"/>
</dbReference>
<dbReference type="GO" id="GO:1902430">
    <property type="term" value="P:negative regulation of amyloid-beta formation"/>
    <property type="evidence" value="ECO:0007669"/>
    <property type="project" value="Ensembl"/>
</dbReference>
<dbReference type="GO" id="GO:0043066">
    <property type="term" value="P:negative regulation of apoptotic process"/>
    <property type="evidence" value="ECO:0007669"/>
    <property type="project" value="Ensembl"/>
</dbReference>
<dbReference type="GO" id="GO:0070885">
    <property type="term" value="P:negative regulation of calcineurin-NFAT signaling cascade"/>
    <property type="evidence" value="ECO:0007669"/>
    <property type="project" value="Ensembl"/>
</dbReference>
<dbReference type="GO" id="GO:1902951">
    <property type="term" value="P:negative regulation of dendritic spine maintenance"/>
    <property type="evidence" value="ECO:0007669"/>
    <property type="project" value="Ensembl"/>
</dbReference>
<dbReference type="GO" id="GO:0032700">
    <property type="term" value="P:negative regulation of interleukin-17 production"/>
    <property type="evidence" value="ECO:0007669"/>
    <property type="project" value="Ensembl"/>
</dbReference>
<dbReference type="GO" id="GO:0032703">
    <property type="term" value="P:negative regulation of interleukin-2 production"/>
    <property type="evidence" value="ECO:0007669"/>
    <property type="project" value="Ensembl"/>
</dbReference>
<dbReference type="GO" id="GO:0050860">
    <property type="term" value="P:negative regulation of T cell receptor signaling pathway"/>
    <property type="evidence" value="ECO:0007669"/>
    <property type="project" value="Ensembl"/>
</dbReference>
<dbReference type="GO" id="GO:0000122">
    <property type="term" value="P:negative regulation of transcription by RNA polymerase II"/>
    <property type="evidence" value="ECO:0007669"/>
    <property type="project" value="Ensembl"/>
</dbReference>
<dbReference type="GO" id="GO:0032689">
    <property type="term" value="P:negative regulation of type II interferon production"/>
    <property type="evidence" value="ECO:0007669"/>
    <property type="project" value="Ensembl"/>
</dbReference>
<dbReference type="GO" id="GO:1990535">
    <property type="term" value="P:neuron projection maintenance"/>
    <property type="evidence" value="ECO:0007669"/>
    <property type="project" value="Ensembl"/>
</dbReference>
<dbReference type="GO" id="GO:0050850">
    <property type="term" value="P:positive regulation of calcium-mediated signaling"/>
    <property type="evidence" value="ECO:0007669"/>
    <property type="project" value="Ensembl"/>
</dbReference>
<dbReference type="GO" id="GO:1900451">
    <property type="term" value="P:positive regulation of glutamate receptor signaling pathway"/>
    <property type="evidence" value="ECO:0007669"/>
    <property type="project" value="Ensembl"/>
</dbReference>
<dbReference type="GO" id="GO:0043525">
    <property type="term" value="P:positive regulation of neuron apoptotic process"/>
    <property type="evidence" value="ECO:0007669"/>
    <property type="project" value="Ensembl"/>
</dbReference>
<dbReference type="GO" id="GO:1903078">
    <property type="term" value="P:positive regulation of protein localization to plasma membrane"/>
    <property type="evidence" value="ECO:0007669"/>
    <property type="project" value="Ensembl"/>
</dbReference>
<dbReference type="GO" id="GO:0090314">
    <property type="term" value="P:positive regulation of protein targeting to membrane"/>
    <property type="evidence" value="ECO:0007669"/>
    <property type="project" value="Ensembl"/>
</dbReference>
<dbReference type="GO" id="GO:0031648">
    <property type="term" value="P:protein destabilization"/>
    <property type="evidence" value="ECO:0007669"/>
    <property type="project" value="Ensembl"/>
</dbReference>
<dbReference type="GO" id="GO:0051260">
    <property type="term" value="P:protein homooligomerization"/>
    <property type="evidence" value="ECO:0007669"/>
    <property type="project" value="InterPro"/>
</dbReference>
<dbReference type="GO" id="GO:1905664">
    <property type="term" value="P:regulation of calcium ion import across plasma membrane"/>
    <property type="evidence" value="ECO:0007669"/>
    <property type="project" value="Ensembl"/>
</dbReference>
<dbReference type="GO" id="GO:1901379">
    <property type="term" value="P:regulation of potassium ion transmembrane transport"/>
    <property type="evidence" value="ECO:0007669"/>
    <property type="project" value="Ensembl"/>
</dbReference>
<dbReference type="GO" id="GO:0006979">
    <property type="term" value="P:response to oxidative stress"/>
    <property type="evidence" value="ECO:0007669"/>
    <property type="project" value="Ensembl"/>
</dbReference>
<dbReference type="FunFam" id="1.10.790.10:FF:000001">
    <property type="entry name" value="Major prion protein"/>
    <property type="match status" value="1"/>
</dbReference>
<dbReference type="Gene3D" id="1.10.790.10">
    <property type="entry name" value="Prion/Doppel protein, beta-ribbon domain"/>
    <property type="match status" value="1"/>
</dbReference>
<dbReference type="InterPro" id="IPR000817">
    <property type="entry name" value="Prion"/>
</dbReference>
<dbReference type="InterPro" id="IPR036924">
    <property type="entry name" value="Prion/Doppel_b-ribbon_dom_sf"/>
</dbReference>
<dbReference type="InterPro" id="IPR022416">
    <property type="entry name" value="Prion/Doppel_prot_b-ribbon_dom"/>
</dbReference>
<dbReference type="InterPro" id="IPR020949">
    <property type="entry name" value="Prion_copper_b_octapeptide"/>
</dbReference>
<dbReference type="InterPro" id="IPR025860">
    <property type="entry name" value="Prion_N"/>
</dbReference>
<dbReference type="PANTHER" id="PTHR15506">
    <property type="entry name" value="DOPPEL PRION"/>
    <property type="match status" value="1"/>
</dbReference>
<dbReference type="PANTHER" id="PTHR15506:SF3">
    <property type="entry name" value="MAJOR PRION PROTEIN"/>
    <property type="match status" value="1"/>
</dbReference>
<dbReference type="Pfam" id="PF00377">
    <property type="entry name" value="Prion"/>
    <property type="match status" value="1"/>
</dbReference>
<dbReference type="Pfam" id="PF11587">
    <property type="entry name" value="Prion_bPrPp"/>
    <property type="match status" value="1"/>
</dbReference>
<dbReference type="Pfam" id="PF03991">
    <property type="entry name" value="Prion_octapep"/>
    <property type="match status" value="1"/>
</dbReference>
<dbReference type="PRINTS" id="PR00341">
    <property type="entry name" value="PRION"/>
</dbReference>
<dbReference type="SMART" id="SM00157">
    <property type="entry name" value="PRP"/>
    <property type="match status" value="1"/>
</dbReference>
<dbReference type="SUPFAM" id="SSF54098">
    <property type="entry name" value="Prion-like"/>
    <property type="match status" value="1"/>
</dbReference>
<dbReference type="PROSITE" id="PS00291">
    <property type="entry name" value="PRION_1"/>
    <property type="match status" value="1"/>
</dbReference>
<dbReference type="PROSITE" id="PS00706">
    <property type="entry name" value="PRION_2"/>
    <property type="match status" value="1"/>
</dbReference>
<evidence type="ECO:0000250" key="1">
    <source>
        <dbReference type="UniProtKB" id="P04156"/>
    </source>
</evidence>
<evidence type="ECO:0000250" key="2">
    <source>
        <dbReference type="UniProtKB" id="P04273"/>
    </source>
</evidence>
<evidence type="ECO:0000250" key="3">
    <source>
        <dbReference type="UniProtKB" id="P04925"/>
    </source>
</evidence>
<evidence type="ECO:0000255" key="4"/>
<evidence type="ECO:0000256" key="5">
    <source>
        <dbReference type="SAM" id="MobiDB-lite"/>
    </source>
</evidence>
<evidence type="ECO:0000305" key="6"/>
<comment type="function">
    <text evidence="1 3">Its primary physiological function is unclear. May play a role in neuronal development and synaptic plasticity. May be required for neuronal myelin sheath maintenance. May promote myelin homeostasis through acting as an agonist for ADGRG6 receptor. May play a role in iron uptake and iron homeostasis. Soluble oligomers are toxic to cultured neuroblastoma cells and induce apoptosis (in vitro) (By similarity). Association with GPC1 (via its heparan sulfate chains) targets PRNP to lipid rafts. Also provides Cu(2+) or Zn(2+) for the ascorbate-mediated GPC1 deaminase degradation of its heparan sulfate side chains (By similarity).</text>
</comment>
<comment type="subunit">
    <text evidence="1 3">Monomer and homodimer. Has a tendency to aggregate into amyloid fibrils containing a cross-beta spine, formed by a steric zipper of superposed beta-strands. Soluble oligomers may represent an intermediate stage on the path to fibril formation. Copper binding may promote oligomerization. Interacts with GRB2, APP, ERI3/PRNPIP and SYN1 (By similarity). Mislocalized cytosolically exposed PrP interacts with MGRN1; this interaction alters MGRN1 subcellular location and causes lysosomal enlargement (By similarity). Interacts with APP. Interacts with KIAA1191 (By similarity). Interacts with ADGRG6 (By similarity).</text>
</comment>
<comment type="subcellular location">
    <subcellularLocation>
        <location evidence="1">Cell membrane</location>
        <topology evidence="1">Lipid-anchor</topology>
        <topology evidence="1">GPI-anchor</topology>
    </subcellularLocation>
    <subcellularLocation>
        <location evidence="3">Golgi apparatus</location>
    </subcellularLocation>
    <text evidence="1">Targeted to lipid rafts via association with the heparan sulfate chains of GPC1. Colocates, in the presence of Cu(2+), to vesicles in para- and perinuclear regions, where both proteins undergo internalization. Heparin displaces PRNP from lipid rafts and promotes endocytosis.</text>
</comment>
<comment type="domain">
    <text evidence="1">The normal, monomeric form has a mainly alpha-helical structure. The disease-associated, protease-resistant form forms amyloid fibrils containing a cross-beta spine, formed by a steric zipper of superposed beta-strands. Disease mutations may favor intermolecular contacts via short beta strands, and may thereby trigger oligomerization.</text>
</comment>
<comment type="domain">
    <text evidence="1">Contains an N-terminal region composed of octamer repeats. At low copper concentrations, the sidechains of His residues from three or four repeats contribute to the binding of a single copper ion. Alternatively, a copper ion can be bound by interaction with the sidechain and backbone amide nitrogen of a single His residue. The observed copper binding stoichiometry suggests that two repeat regions cooperate to stabilize the binding of a single copper ion. At higher copper concentrations, each octamer can bind one copper ion by interactions with the His sidechain and Gly backbone atoms. A mixture of binding types may occur, especially in the case of octamer repeat expansion. Copper binding may stabilize the conformation of this region and may promote oligomerization.</text>
</comment>
<comment type="disease">
    <text evidence="6">Found in high quantity in the brain of humans and animals infected with degenerative neurological diseases such as kuru, Creutzfeldt-Jakob disease (CJD), Gerstmann-Straussler syndrome (GSS), scrapie, bovine spongiform encephalopathy (BSE), transmissible mink encephalopathy (TME), etc.</text>
</comment>
<comment type="similarity">
    <text evidence="6">Belongs to the prion family.</text>
</comment>
<sequence>MVKSHIGSWLLVLFVATWSDIGFCKKRPKPGGGWNTGGSRYPGQGSPGGNRYPPQGGGGWGQPHGGGWGQPHGGGWGQPHGGGWGQPHGGGGWGQGGGSHGQWGKPSKPKTNMKHVAGAAAAGAVVGGLGGYMLGSAMSRPLIHFGNDYEDRYYRENMYRYPNQVYYKPVDQYSNQNNFVHDCVNITVKQHTVTTTTKGENFTETDMKIMERVVEQMCVTQYQRESEAYYQRGASAILFSPPPVILLISLLILLIVG</sequence>
<reference key="1">
    <citation type="journal article" date="1992" name="J. Gen. Virol.">
        <title>Molecular cloning of a mink prion protein gene.</title>
        <authorList>
            <person name="Kretzschmar H.A."/>
            <person name="Neumann M."/>
            <person name="Riethmueller G."/>
            <person name="Prusiner S.B."/>
        </authorList>
    </citation>
    <scope>NUCLEOTIDE SEQUENCE [GENOMIC DNA]</scope>
    <source>
        <tissue>Liver</tissue>
    </source>
</reference>
<accession>P40244</accession>
<feature type="signal peptide" evidence="4">
    <location>
        <begin position="1"/>
        <end position="24"/>
    </location>
</feature>
<feature type="chain" id="PRO_0000025701" description="Major prion protein">
    <location>
        <begin position="25"/>
        <end position="234"/>
    </location>
</feature>
<feature type="propeptide" id="PRO_0000025702" description="Removed in mature form" evidence="4">
    <location>
        <begin position="235"/>
        <end position="257"/>
    </location>
</feature>
<feature type="repeat" description="1">
    <location>
        <begin position="54"/>
        <end position="62"/>
    </location>
</feature>
<feature type="repeat" description="2">
    <location>
        <begin position="63"/>
        <end position="70"/>
    </location>
</feature>
<feature type="repeat" description="3">
    <location>
        <begin position="71"/>
        <end position="78"/>
    </location>
</feature>
<feature type="repeat" description="4">
    <location>
        <begin position="79"/>
        <end position="86"/>
    </location>
</feature>
<feature type="repeat" description="5">
    <location>
        <begin position="87"/>
        <end position="95"/>
    </location>
</feature>
<feature type="region of interest" description="Interaction with GRB2, ERI3 and SYN1" evidence="3">
    <location>
        <begin position="25"/>
        <end position="234"/>
    </location>
</feature>
<feature type="region of interest" description="Interaction with ADGRG6" evidence="3">
    <location>
        <begin position="25"/>
        <end position="41"/>
    </location>
</feature>
<feature type="region of interest" description="Disordered" evidence="5">
    <location>
        <begin position="27"/>
        <end position="114"/>
    </location>
</feature>
<feature type="region of interest" description="5 X 8 AA tandem repeats of P-H-G-G-G-W-G-Q">
    <location>
        <begin position="54"/>
        <end position="95"/>
    </location>
</feature>
<feature type="compositionally biased region" description="Gly residues" evidence="5">
    <location>
        <begin position="55"/>
        <end position="101"/>
    </location>
</feature>
<feature type="binding site" evidence="1">
    <location>
        <position position="64"/>
    </location>
    <ligand>
        <name>Cu(2+)</name>
        <dbReference type="ChEBI" id="CHEBI:29036"/>
        <label>1</label>
    </ligand>
</feature>
<feature type="binding site" evidence="1">
    <location>
        <position position="65"/>
    </location>
    <ligand>
        <name>Cu(2+)</name>
        <dbReference type="ChEBI" id="CHEBI:29036"/>
        <label>1</label>
    </ligand>
</feature>
<feature type="binding site" evidence="1">
    <location>
        <position position="66"/>
    </location>
    <ligand>
        <name>Cu(2+)</name>
        <dbReference type="ChEBI" id="CHEBI:29036"/>
        <label>1</label>
    </ligand>
</feature>
<feature type="binding site" evidence="1">
    <location>
        <position position="72"/>
    </location>
    <ligand>
        <name>Cu(2+)</name>
        <dbReference type="ChEBI" id="CHEBI:29036"/>
        <label>2</label>
    </ligand>
</feature>
<feature type="binding site" evidence="1">
    <location>
        <position position="73"/>
    </location>
    <ligand>
        <name>Cu(2+)</name>
        <dbReference type="ChEBI" id="CHEBI:29036"/>
        <label>2</label>
    </ligand>
</feature>
<feature type="binding site" evidence="1">
    <location>
        <position position="74"/>
    </location>
    <ligand>
        <name>Cu(2+)</name>
        <dbReference type="ChEBI" id="CHEBI:29036"/>
        <label>2</label>
    </ligand>
</feature>
<feature type="binding site" evidence="1">
    <location>
        <position position="80"/>
    </location>
    <ligand>
        <name>Cu(2+)</name>
        <dbReference type="ChEBI" id="CHEBI:29036"/>
        <label>3</label>
    </ligand>
</feature>
<feature type="binding site" evidence="1">
    <location>
        <position position="81"/>
    </location>
    <ligand>
        <name>Cu(2+)</name>
        <dbReference type="ChEBI" id="CHEBI:29036"/>
        <label>3</label>
    </ligand>
</feature>
<feature type="binding site" evidence="1">
    <location>
        <position position="82"/>
    </location>
    <ligand>
        <name>Cu(2+)</name>
        <dbReference type="ChEBI" id="CHEBI:29036"/>
        <label>3</label>
    </ligand>
</feature>
<feature type="binding site" evidence="1">
    <location>
        <position position="88"/>
    </location>
    <ligand>
        <name>Cu(2+)</name>
        <dbReference type="ChEBI" id="CHEBI:29036"/>
        <label>4</label>
    </ligand>
</feature>
<feature type="binding site" evidence="1">
    <location>
        <position position="90"/>
    </location>
    <ligand>
        <name>Cu(2+)</name>
        <dbReference type="ChEBI" id="CHEBI:29036"/>
        <label>4</label>
    </ligand>
</feature>
<feature type="binding site" evidence="1">
    <location>
        <position position="91"/>
    </location>
    <ligand>
        <name>Cu(2+)</name>
        <dbReference type="ChEBI" id="CHEBI:29036"/>
        <label>4</label>
    </ligand>
</feature>
<feature type="lipid moiety-binding region" description="GPI-anchor amidated alanine" evidence="4">
    <location>
        <position position="234"/>
    </location>
</feature>
<feature type="glycosylation site" description="N-linked (GlcNAc...) asparagine" evidence="4">
    <location>
        <position position="185"/>
    </location>
</feature>
<feature type="glycosylation site" description="N-linked (GlcNAc...) asparagine" evidence="4">
    <location>
        <position position="201"/>
    </location>
</feature>
<feature type="disulfide bond" evidence="2">
    <location>
        <begin position="183"/>
        <end position="218"/>
    </location>
</feature>
<name>PRIO_NEOVI</name>